<comment type="function">
    <text evidence="3">Involved in cholesterol degradation. Catalyzes the retro-aldol cleavage of 4-hydroxy-2-oxohexanoate (HOHA) to pyruvate and propanal. Can also catalyze the cleavage of 4-hydroxy-2-oxopentanoate (HOPA) to pyruvate and acetaldehyde. The aldehydes produced by this reaction are directly channeled to the dehydrogenase HsaG.</text>
</comment>
<comment type="catalytic activity">
    <reaction evidence="3">
        <text>(S)-4-hydroxy-2-oxohexanoate = propanal + pyruvate</text>
        <dbReference type="Rhea" id="RHEA:36003"/>
        <dbReference type="ChEBI" id="CHEBI:15361"/>
        <dbReference type="ChEBI" id="CHEBI:17153"/>
        <dbReference type="ChEBI" id="CHEBI:73142"/>
        <dbReference type="EC" id="4.1.3.43"/>
    </reaction>
    <physiologicalReaction direction="left-to-right" evidence="3">
        <dbReference type="Rhea" id="RHEA:36004"/>
    </physiologicalReaction>
</comment>
<comment type="catalytic activity">
    <reaction evidence="1 3">
        <text>(S)-4-hydroxy-2-oxopentanoate = acetaldehyde + pyruvate</text>
        <dbReference type="Rhea" id="RHEA:22624"/>
        <dbReference type="ChEBI" id="CHEBI:15343"/>
        <dbReference type="ChEBI" id="CHEBI:15361"/>
        <dbReference type="ChEBI" id="CHEBI:73143"/>
        <dbReference type="EC" id="4.1.3.39"/>
    </reaction>
    <physiologicalReaction direction="left-to-right" evidence="3">
        <dbReference type="Rhea" id="RHEA:22625"/>
    </physiologicalReaction>
</comment>
<comment type="cofactor">
    <cofactor evidence="3">
        <name>Mn(2+)</name>
        <dbReference type="ChEBI" id="CHEBI:29035"/>
    </cofactor>
    <cofactor evidence="3">
        <name>Ni(2+)</name>
        <dbReference type="ChEBI" id="CHEBI:49786"/>
    </cofactor>
    <cofactor evidence="3">
        <name>Co(2+)</name>
        <dbReference type="ChEBI" id="CHEBI:48828"/>
    </cofactor>
    <text evidence="3">Requires a divalent metal cation. Activity is highest in the presence of Mn(2+), followed by Co(2+) and Ni(2+). Mg(2+) and Ca(2+) are poor metal cofactors. No activity with Cd(2+), Zn(2+) or Cu(2+).</text>
</comment>
<comment type="activity regulation">
    <text evidence="3">Shows aldolase activity only when expressed and copurified with HsaG. This arrangement probably prevents the deleterious formation and release of toxic aldehydes in the absence of the partner dehydrogenase.</text>
</comment>
<comment type="biophysicochemical properties">
    <kinetics>
        <KM evidence="3">4.8 uM for 4-hydroxy-2-oxohexanoate</KM>
        <KM evidence="3">4.4 uM for 4-hydroxy-2-oxopentanoate</KM>
        <text evidence="3">kcat is 0.38 sec(-1) with 4-hydroxy-2-oxohexanoate as substrate. kcat is 0.41 sec(-1) with 4-hydroxy-2-oxopentanoate as substrate.</text>
    </kinetics>
</comment>
<comment type="subunit">
    <text evidence="3">Homodimer. Forms a heterotetramer composed of two aldolase (HsaF) and two dehydrogenase (HsaG) subunits.</text>
</comment>
<comment type="similarity">
    <text evidence="1">Belongs to the 4-hydroxy-2-oxovalerate aldolase family.</text>
</comment>
<proteinExistence type="evidence at protein level"/>
<gene>
    <name evidence="4" type="primary">hsaF</name>
    <name type="ordered locus">Rv3534c</name>
</gene>
<name>HOA_MYCTU</name>
<keyword id="KW-0002">3D-structure</keyword>
<keyword id="KW-0058">Aromatic hydrocarbons catabolism</keyword>
<keyword id="KW-0170">Cobalt</keyword>
<keyword id="KW-0456">Lyase</keyword>
<keyword id="KW-0464">Manganese</keyword>
<keyword id="KW-0479">Metal-binding</keyword>
<keyword id="KW-0533">Nickel</keyword>
<keyword id="KW-1185">Reference proteome</keyword>
<sequence length="346" mass="36442">MTDMWDVRITDTSLRDGSHHKRHQFTKDEVGAIVAALDAAGVPVIEVTHGDGLGGSSFNYGFSKTPEQELIKLAAATAKEARIAFLMLPGVGTKDDIKEARDNGGSICRIATHCTEADVSIQHFGLARELGLETVGFLMMAHTIAPEKLAAQARIMADAGCQCVYVVDSAGALVLDGVADRVSALVAELGEDAQVGFHGHENLGLGVANSVAAVRAGAKQIDGSCRRFGAGAGNAPVEALIGVFDKIGVKTGIDFFDIADAAEDVVRPAMPAECLLDRNALIMGYSGVYSSFLKHAVRQAERYGVPASALLHRAGQRKLIGGQEDQLIDIALEIKRELDSGAAVTH</sequence>
<organism>
    <name type="scientific">Mycobacterium tuberculosis (strain ATCC 25618 / H37Rv)</name>
    <dbReference type="NCBI Taxonomy" id="83332"/>
    <lineage>
        <taxon>Bacteria</taxon>
        <taxon>Bacillati</taxon>
        <taxon>Actinomycetota</taxon>
        <taxon>Actinomycetes</taxon>
        <taxon>Mycobacteriales</taxon>
        <taxon>Mycobacteriaceae</taxon>
        <taxon>Mycobacterium</taxon>
        <taxon>Mycobacterium tuberculosis complex</taxon>
    </lineage>
</organism>
<dbReference type="EC" id="4.1.3.43" evidence="3"/>
<dbReference type="EC" id="4.1.3.39" evidence="1 3"/>
<dbReference type="EMBL" id="AL123456">
    <property type="protein sequence ID" value="CCP46356.1"/>
    <property type="molecule type" value="Genomic_DNA"/>
</dbReference>
<dbReference type="PIR" id="G70675">
    <property type="entry name" value="G70675"/>
</dbReference>
<dbReference type="RefSeq" id="NP_218051.1">
    <property type="nucleotide sequence ID" value="NC_000962.3"/>
</dbReference>
<dbReference type="PDB" id="4JN6">
    <property type="method" value="X-ray"/>
    <property type="resolution" value="1.93 A"/>
    <property type="chains" value="A/C=1-346"/>
</dbReference>
<dbReference type="PDBsum" id="4JN6"/>
<dbReference type="SMR" id="P9WMK5"/>
<dbReference type="FunCoup" id="P9WMK5">
    <property type="interactions" value="226"/>
</dbReference>
<dbReference type="STRING" id="83332.Rv3534c"/>
<dbReference type="PaxDb" id="83332-Rv3534c"/>
<dbReference type="DNASU" id="888387"/>
<dbReference type="GeneID" id="888387"/>
<dbReference type="KEGG" id="mtu:Rv3534c"/>
<dbReference type="KEGG" id="mtv:RVBD_3534c"/>
<dbReference type="TubercuList" id="Rv3534c"/>
<dbReference type="eggNOG" id="COG0119">
    <property type="taxonomic scope" value="Bacteria"/>
</dbReference>
<dbReference type="InParanoid" id="P9WMK5"/>
<dbReference type="OrthoDB" id="9803573at2"/>
<dbReference type="PhylomeDB" id="P9WMK5"/>
<dbReference type="BioCyc" id="MetaCyc:G185E-7811-MONOMER"/>
<dbReference type="BRENDA" id="4.1.3.39">
    <property type="organism ID" value="3445"/>
</dbReference>
<dbReference type="EvolutionaryTrace" id="P9WMK5"/>
<dbReference type="Proteomes" id="UP000001584">
    <property type="component" value="Chromosome"/>
</dbReference>
<dbReference type="GO" id="GO:0009274">
    <property type="term" value="C:peptidoglycan-based cell wall"/>
    <property type="evidence" value="ECO:0007005"/>
    <property type="project" value="MTBBASE"/>
</dbReference>
<dbReference type="GO" id="GO:0003852">
    <property type="term" value="F:2-isopropylmalate synthase activity"/>
    <property type="evidence" value="ECO:0000318"/>
    <property type="project" value="GO_Central"/>
</dbReference>
<dbReference type="GO" id="GO:0008701">
    <property type="term" value="F:4-hydroxy-2-oxovalerate aldolase activity"/>
    <property type="evidence" value="ECO:0007669"/>
    <property type="project" value="UniProtKB-UniRule"/>
</dbReference>
<dbReference type="GO" id="GO:0030145">
    <property type="term" value="F:manganese ion binding"/>
    <property type="evidence" value="ECO:0007669"/>
    <property type="project" value="UniProtKB-UniRule"/>
</dbReference>
<dbReference type="GO" id="GO:0009056">
    <property type="term" value="P:catabolic process"/>
    <property type="evidence" value="ECO:0007669"/>
    <property type="project" value="UniProtKB-KW"/>
</dbReference>
<dbReference type="GO" id="GO:0009098">
    <property type="term" value="P:L-leucine biosynthetic process"/>
    <property type="evidence" value="ECO:0000318"/>
    <property type="project" value="GO_Central"/>
</dbReference>
<dbReference type="CDD" id="cd07943">
    <property type="entry name" value="DRE_TIM_HOA"/>
    <property type="match status" value="1"/>
</dbReference>
<dbReference type="FunFam" id="1.10.8.60:FF:000042">
    <property type="entry name" value="4-hydroxy-2-oxovalerate aldolase"/>
    <property type="match status" value="1"/>
</dbReference>
<dbReference type="FunFam" id="3.20.20.70:FF:000072">
    <property type="entry name" value="4-hydroxy-2-oxovalerate aldolase"/>
    <property type="match status" value="1"/>
</dbReference>
<dbReference type="Gene3D" id="1.10.8.60">
    <property type="match status" value="1"/>
</dbReference>
<dbReference type="Gene3D" id="3.20.20.70">
    <property type="entry name" value="Aldolase class I"/>
    <property type="match status" value="1"/>
</dbReference>
<dbReference type="HAMAP" id="MF_01656">
    <property type="entry name" value="HOA"/>
    <property type="match status" value="1"/>
</dbReference>
<dbReference type="InterPro" id="IPR050073">
    <property type="entry name" value="2-IPM_HCS-like"/>
</dbReference>
<dbReference type="InterPro" id="IPR017629">
    <property type="entry name" value="4OH_2_O-val_aldolase"/>
</dbReference>
<dbReference type="InterPro" id="IPR013785">
    <property type="entry name" value="Aldolase_TIM"/>
</dbReference>
<dbReference type="InterPro" id="IPR012425">
    <property type="entry name" value="DmpG_comm"/>
</dbReference>
<dbReference type="InterPro" id="IPR035685">
    <property type="entry name" value="DRE_TIM_HOA"/>
</dbReference>
<dbReference type="InterPro" id="IPR000891">
    <property type="entry name" value="PYR_CT"/>
</dbReference>
<dbReference type="NCBIfam" id="TIGR03217">
    <property type="entry name" value="4OH_2_O_val_ald"/>
    <property type="match status" value="1"/>
</dbReference>
<dbReference type="NCBIfam" id="NF006049">
    <property type="entry name" value="PRK08195.1"/>
    <property type="match status" value="1"/>
</dbReference>
<dbReference type="PANTHER" id="PTHR10277:SF9">
    <property type="entry name" value="2-ISOPROPYLMALATE SYNTHASE 1, CHLOROPLASTIC-RELATED"/>
    <property type="match status" value="1"/>
</dbReference>
<dbReference type="PANTHER" id="PTHR10277">
    <property type="entry name" value="HOMOCITRATE SYNTHASE-RELATED"/>
    <property type="match status" value="1"/>
</dbReference>
<dbReference type="Pfam" id="PF07836">
    <property type="entry name" value="DmpG_comm"/>
    <property type="match status" value="1"/>
</dbReference>
<dbReference type="Pfam" id="PF00682">
    <property type="entry name" value="HMGL-like"/>
    <property type="match status" value="1"/>
</dbReference>
<dbReference type="SUPFAM" id="SSF51569">
    <property type="entry name" value="Aldolase"/>
    <property type="match status" value="1"/>
</dbReference>
<dbReference type="SUPFAM" id="SSF89000">
    <property type="entry name" value="post-HMGL domain-like"/>
    <property type="match status" value="1"/>
</dbReference>
<dbReference type="PROSITE" id="PS50991">
    <property type="entry name" value="PYR_CT"/>
    <property type="match status" value="1"/>
</dbReference>
<feature type="chain" id="PRO_0000387862" description="4-hydroxy-2-oxohexanoate aldolase">
    <location>
        <begin position="1"/>
        <end position="346"/>
    </location>
</feature>
<feature type="domain" description="Pyruvate carboxyltransferase" evidence="2">
    <location>
        <begin position="7"/>
        <end position="259"/>
    </location>
</feature>
<feature type="active site" description="Proton acceptor" evidence="1">
    <location>
        <position position="19"/>
    </location>
</feature>
<feature type="binding site" evidence="1 6">
    <location>
        <begin position="15"/>
        <end position="16"/>
    </location>
    <ligand>
        <name>substrate</name>
    </ligand>
</feature>
<feature type="binding site" evidence="1 3">
    <location>
        <position position="16"/>
    </location>
    <ligand>
        <name>Mn(2+)</name>
        <dbReference type="ChEBI" id="CHEBI:29035"/>
    </ligand>
</feature>
<feature type="binding site" evidence="1 6">
    <location>
        <position position="169"/>
    </location>
    <ligand>
        <name>substrate</name>
    </ligand>
</feature>
<feature type="binding site" evidence="1 3">
    <location>
        <position position="198"/>
    </location>
    <ligand>
        <name>Mn(2+)</name>
        <dbReference type="ChEBI" id="CHEBI:29035"/>
    </ligand>
</feature>
<feature type="binding site" evidence="1">
    <location>
        <position position="198"/>
    </location>
    <ligand>
        <name>substrate</name>
    </ligand>
</feature>
<feature type="binding site" evidence="1 3">
    <location>
        <position position="200"/>
    </location>
    <ligand>
        <name>Mn(2+)</name>
        <dbReference type="ChEBI" id="CHEBI:29035"/>
    </ligand>
</feature>
<feature type="binding site" evidence="1 6">
    <location>
        <position position="289"/>
    </location>
    <ligand>
        <name>substrate</name>
    </ligand>
</feature>
<feature type="site" description="Transition state stabilizer" evidence="1">
    <location>
        <position position="15"/>
    </location>
</feature>
<feature type="mutagenesis site" description="Abolishes substrate channeling to HsaG." evidence="3">
    <original>G</original>
    <variation>F</variation>
    <location>
        <position position="322"/>
    </location>
</feature>
<feature type="strand" evidence="8">
    <location>
        <begin position="6"/>
        <end position="14"/>
    </location>
</feature>
<feature type="helix" evidence="8">
    <location>
        <begin position="16"/>
        <end position="20"/>
    </location>
</feature>
<feature type="turn" evidence="8">
    <location>
        <begin position="21"/>
        <end position="23"/>
    </location>
</feature>
<feature type="helix" evidence="8">
    <location>
        <begin position="27"/>
        <end position="39"/>
    </location>
</feature>
<feature type="strand" evidence="8">
    <location>
        <begin position="43"/>
        <end position="48"/>
    </location>
</feature>
<feature type="turn" evidence="8">
    <location>
        <begin position="58"/>
        <end position="60"/>
    </location>
</feature>
<feature type="helix" evidence="8">
    <location>
        <begin position="67"/>
        <end position="77"/>
    </location>
</feature>
<feature type="strand" evidence="8">
    <location>
        <begin position="79"/>
        <end position="87"/>
    </location>
</feature>
<feature type="helix" evidence="8">
    <location>
        <begin position="94"/>
        <end position="102"/>
    </location>
</feature>
<feature type="strand" evidence="8">
    <location>
        <begin position="107"/>
        <end position="113"/>
    </location>
</feature>
<feature type="helix" evidence="8">
    <location>
        <begin position="117"/>
        <end position="120"/>
    </location>
</feature>
<feature type="helix" evidence="8">
    <location>
        <begin position="121"/>
        <end position="129"/>
    </location>
</feature>
<feature type="strand" evidence="8">
    <location>
        <begin position="133"/>
        <end position="140"/>
    </location>
</feature>
<feature type="helix" evidence="8">
    <location>
        <begin position="141"/>
        <end position="143"/>
    </location>
</feature>
<feature type="helix" evidence="8">
    <location>
        <begin position="146"/>
        <end position="158"/>
    </location>
</feature>
<feature type="strand" evidence="8">
    <location>
        <begin position="162"/>
        <end position="168"/>
    </location>
</feature>
<feature type="helix" evidence="8">
    <location>
        <begin position="176"/>
        <end position="189"/>
    </location>
</feature>
<feature type="strand" evidence="8">
    <location>
        <begin position="194"/>
        <end position="200"/>
    </location>
</feature>
<feature type="helix" evidence="8">
    <location>
        <begin position="206"/>
        <end position="215"/>
    </location>
</feature>
<feature type="strand" evidence="8">
    <location>
        <begin position="220"/>
        <end position="224"/>
    </location>
</feature>
<feature type="helix" evidence="8">
    <location>
        <begin position="225"/>
        <end position="227"/>
    </location>
</feature>
<feature type="helix" evidence="8">
    <location>
        <begin position="237"/>
        <end position="246"/>
    </location>
</feature>
<feature type="helix" evidence="8">
    <location>
        <begin position="255"/>
        <end position="264"/>
    </location>
</feature>
<feature type="helix" evidence="8">
    <location>
        <begin position="267"/>
        <end position="269"/>
    </location>
</feature>
<feature type="strand" evidence="8">
    <location>
        <begin position="270"/>
        <end position="272"/>
    </location>
</feature>
<feature type="helix" evidence="8">
    <location>
        <begin position="278"/>
        <end position="286"/>
    </location>
</feature>
<feature type="helix" evidence="8">
    <location>
        <begin position="292"/>
        <end position="303"/>
    </location>
</feature>
<feature type="helix" evidence="8">
    <location>
        <begin position="307"/>
        <end position="316"/>
    </location>
</feature>
<feature type="helix" evidence="8">
    <location>
        <begin position="325"/>
        <end position="338"/>
    </location>
</feature>
<accession>P9WMK5</accession>
<accession>L0TFQ6</accession>
<accession>P71867</accession>
<accession>Q7D5C4</accession>
<protein>
    <recommendedName>
        <fullName evidence="5">4-hydroxy-2-oxohexanoate aldolase</fullName>
        <ecNumber evidence="3">4.1.3.43</ecNumber>
    </recommendedName>
    <alternativeName>
        <fullName evidence="1">4-hydroxy-2-keto-pentanoic acid aldolase</fullName>
    </alternativeName>
    <alternativeName>
        <fullName evidence="1">4-hydroxy-2-oxopentanoate aldolase</fullName>
    </alternativeName>
    <alternativeName>
        <fullName evidence="1">4-hydroxy-2-oxovalerate aldolase</fullName>
        <shortName evidence="1">HOA</shortName>
        <ecNumber evidence="1 3">4.1.3.39</ecNumber>
    </alternativeName>
</protein>
<reference key="1">
    <citation type="journal article" date="1998" name="Nature">
        <title>Deciphering the biology of Mycobacterium tuberculosis from the complete genome sequence.</title>
        <authorList>
            <person name="Cole S.T."/>
            <person name="Brosch R."/>
            <person name="Parkhill J."/>
            <person name="Garnier T."/>
            <person name="Churcher C.M."/>
            <person name="Harris D.E."/>
            <person name="Gordon S.V."/>
            <person name="Eiglmeier K."/>
            <person name="Gas S."/>
            <person name="Barry C.E. III"/>
            <person name="Tekaia F."/>
            <person name="Badcock K."/>
            <person name="Basham D."/>
            <person name="Brown D."/>
            <person name="Chillingworth T."/>
            <person name="Connor R."/>
            <person name="Davies R.M."/>
            <person name="Devlin K."/>
            <person name="Feltwell T."/>
            <person name="Gentles S."/>
            <person name="Hamlin N."/>
            <person name="Holroyd S."/>
            <person name="Hornsby T."/>
            <person name="Jagels K."/>
            <person name="Krogh A."/>
            <person name="McLean J."/>
            <person name="Moule S."/>
            <person name="Murphy L.D."/>
            <person name="Oliver S."/>
            <person name="Osborne J."/>
            <person name="Quail M.A."/>
            <person name="Rajandream M.A."/>
            <person name="Rogers J."/>
            <person name="Rutter S."/>
            <person name="Seeger K."/>
            <person name="Skelton S."/>
            <person name="Squares S."/>
            <person name="Squares R."/>
            <person name="Sulston J.E."/>
            <person name="Taylor K."/>
            <person name="Whitehead S."/>
            <person name="Barrell B.G."/>
        </authorList>
    </citation>
    <scope>NUCLEOTIDE SEQUENCE [LARGE SCALE GENOMIC DNA]</scope>
    <source>
        <strain>ATCC 25618 / H37Rv</strain>
    </source>
</reference>
<reference key="2">
    <citation type="journal article" date="2011" name="Mol. Cell. Proteomics">
        <title>Proteogenomic analysis of Mycobacterium tuberculosis by high resolution mass spectrometry.</title>
        <authorList>
            <person name="Kelkar D.S."/>
            <person name="Kumar D."/>
            <person name="Kumar P."/>
            <person name="Balakrishnan L."/>
            <person name="Muthusamy B."/>
            <person name="Yadav A.K."/>
            <person name="Shrivastava P."/>
            <person name="Marimuthu A."/>
            <person name="Anand S."/>
            <person name="Sundaram H."/>
            <person name="Kingsbury R."/>
            <person name="Harsha H.C."/>
            <person name="Nair B."/>
            <person name="Prasad T.S."/>
            <person name="Chauhan D.S."/>
            <person name="Katoch K."/>
            <person name="Katoch V.M."/>
            <person name="Kumar P."/>
            <person name="Chaerkady R."/>
            <person name="Ramachandran S."/>
            <person name="Dash D."/>
            <person name="Pandey A."/>
        </authorList>
    </citation>
    <scope>IDENTIFICATION BY MASS SPECTROMETRY [LARGE SCALE ANALYSIS]</scope>
    <source>
        <strain>ATCC 25618 / H37Rv</strain>
    </source>
</reference>
<reference evidence="7" key="3">
    <citation type="journal article" date="2013" name="Biochemistry">
        <title>Characterization of an aldolase-dehydrogenase complex from the cholesterol degradation pathway of Mycobacterium tuberculosis.</title>
        <authorList>
            <person name="Carere J."/>
            <person name="McKenna S.E."/>
            <person name="Kimber M.S."/>
            <person name="Seah S.Y."/>
        </authorList>
    </citation>
    <scope>X-RAY CRYSTALLOGRAPHY (1.93 ANGSTROMS) IN COMPLEX WITH HSAG; MANGANESE AND OXALATE</scope>
    <scope>FUNCTION</scope>
    <scope>CATALYTIC ACTIVITY</scope>
    <scope>COFACTOR</scope>
    <scope>ACTIVITY REGULATION</scope>
    <scope>BIOPHYSICOCHEMICAL PROPERTIES</scope>
    <scope>SUBUNIT</scope>
    <scope>MUTAGENESIS OF GLY-322</scope>
    <source>
        <strain>H37Rv</strain>
    </source>
</reference>
<evidence type="ECO:0000255" key="1">
    <source>
        <dbReference type="HAMAP-Rule" id="MF_01656"/>
    </source>
</evidence>
<evidence type="ECO:0000255" key="2">
    <source>
        <dbReference type="PROSITE-ProRule" id="PRU01151"/>
    </source>
</evidence>
<evidence type="ECO:0000269" key="3">
    <source>
    </source>
</evidence>
<evidence type="ECO:0000303" key="4">
    <source>
    </source>
</evidence>
<evidence type="ECO:0000305" key="5"/>
<evidence type="ECO:0000305" key="6">
    <source>
    </source>
</evidence>
<evidence type="ECO:0007744" key="7">
    <source>
        <dbReference type="PDB" id="4JN6"/>
    </source>
</evidence>
<evidence type="ECO:0007829" key="8">
    <source>
        <dbReference type="PDB" id="4JN6"/>
    </source>
</evidence>